<accession>Q59LP6</accession>
<accession>A0A1D8PJ55</accession>
<reference key="1">
    <citation type="journal article" date="2004" name="Proc. Natl. Acad. Sci. U.S.A.">
        <title>The diploid genome sequence of Candida albicans.</title>
        <authorList>
            <person name="Jones T."/>
            <person name="Federspiel N.A."/>
            <person name="Chibana H."/>
            <person name="Dungan J."/>
            <person name="Kalman S."/>
            <person name="Magee B.B."/>
            <person name="Newport G."/>
            <person name="Thorstenson Y.R."/>
            <person name="Agabian N."/>
            <person name="Magee P.T."/>
            <person name="Davis R.W."/>
            <person name="Scherer S."/>
        </authorList>
    </citation>
    <scope>NUCLEOTIDE SEQUENCE [LARGE SCALE GENOMIC DNA]</scope>
    <source>
        <strain>SC5314 / ATCC MYA-2876</strain>
    </source>
</reference>
<reference key="2">
    <citation type="journal article" date="2007" name="Genome Biol.">
        <title>Assembly of the Candida albicans genome into sixteen supercontigs aligned on the eight chromosomes.</title>
        <authorList>
            <person name="van het Hoog M."/>
            <person name="Rast T.J."/>
            <person name="Martchenko M."/>
            <person name="Grindle S."/>
            <person name="Dignard D."/>
            <person name="Hogues H."/>
            <person name="Cuomo C."/>
            <person name="Berriman M."/>
            <person name="Scherer S."/>
            <person name="Magee B.B."/>
            <person name="Whiteway M."/>
            <person name="Chibana H."/>
            <person name="Nantel A."/>
            <person name="Magee P.T."/>
        </authorList>
    </citation>
    <scope>GENOME REANNOTATION</scope>
    <source>
        <strain>SC5314 / ATCC MYA-2876</strain>
    </source>
</reference>
<reference key="3">
    <citation type="journal article" date="2013" name="Genome Biol.">
        <title>Assembly of a phased diploid Candida albicans genome facilitates allele-specific measurements and provides a simple model for repeat and indel structure.</title>
        <authorList>
            <person name="Muzzey D."/>
            <person name="Schwartz K."/>
            <person name="Weissman J.S."/>
            <person name="Sherlock G."/>
        </authorList>
    </citation>
    <scope>NUCLEOTIDE SEQUENCE [LARGE SCALE GENOMIC DNA]</scope>
    <scope>GENOME REANNOTATION</scope>
    <source>
        <strain>SC5314 / ATCC MYA-2876</strain>
    </source>
</reference>
<proteinExistence type="inferred from homology"/>
<gene>
    <name type="primary">AIM11</name>
    <name type="ordered locus">CAALFM_C300840CA</name>
    <name type="ORF">CaO19.6156</name>
</gene>
<protein>
    <recommendedName>
        <fullName>Altered inheritance of mitochondria protein 11</fullName>
    </recommendedName>
</protein>
<name>AIM11_CANAL</name>
<organism>
    <name type="scientific">Candida albicans (strain SC5314 / ATCC MYA-2876)</name>
    <name type="common">Yeast</name>
    <dbReference type="NCBI Taxonomy" id="237561"/>
    <lineage>
        <taxon>Eukaryota</taxon>
        <taxon>Fungi</taxon>
        <taxon>Dikarya</taxon>
        <taxon>Ascomycota</taxon>
        <taxon>Saccharomycotina</taxon>
        <taxon>Pichiomycetes</taxon>
        <taxon>Debaryomycetaceae</taxon>
        <taxon>Candida/Lodderomyces clade</taxon>
        <taxon>Candida</taxon>
    </lineage>
</organism>
<sequence length="165" mass="18562">MSDLLHKLNFKIADASPEYKQRRKIQMIRFFTASAVTIFASRFAYRATVSRQYIPTLFQGNHSPPLSYNFTTDAAVAVGTGTLLCGSVTGMTVFGLCWILDVSNIKEFGWRMKSMLGGWESEKKLSEAPMDEESSYIQDSLNDILDGKYDFENDTEEVAGELKTN</sequence>
<comment type="subcellular location">
    <subcellularLocation>
        <location evidence="2">Membrane</location>
        <topology evidence="2">Multi-pass membrane protein</topology>
    </subcellularLocation>
</comment>
<comment type="similarity">
    <text evidence="2">Belongs to the AIM11 family.</text>
</comment>
<dbReference type="EMBL" id="CP017625">
    <property type="protein sequence ID" value="AOW28133.1"/>
    <property type="molecule type" value="Genomic_DNA"/>
</dbReference>
<dbReference type="RefSeq" id="XP_710638.1">
    <property type="nucleotide sequence ID" value="XM_705546.2"/>
</dbReference>
<dbReference type="SMR" id="Q59LP6"/>
<dbReference type="FunCoup" id="Q59LP6">
    <property type="interactions" value="28"/>
</dbReference>
<dbReference type="EnsemblFungi" id="C3_00840C_A-T">
    <property type="protein sequence ID" value="C3_00840C_A-T-p1"/>
    <property type="gene ID" value="C3_00840C_A"/>
</dbReference>
<dbReference type="GeneID" id="3647758"/>
<dbReference type="KEGG" id="cal:CAALFM_C300840CA"/>
<dbReference type="CGD" id="CAL0000201599">
    <property type="gene designation" value="orf19.6156"/>
</dbReference>
<dbReference type="VEuPathDB" id="FungiDB:C3_00840C_A"/>
<dbReference type="eggNOG" id="ENOG502SAK0">
    <property type="taxonomic scope" value="Eukaryota"/>
</dbReference>
<dbReference type="HOGENOM" id="CLU_118700_0_0_1"/>
<dbReference type="InParanoid" id="Q59LP6"/>
<dbReference type="OMA" id="RFAYKST"/>
<dbReference type="OrthoDB" id="4088121at2759"/>
<dbReference type="Proteomes" id="UP000000559">
    <property type="component" value="Chromosome 3"/>
</dbReference>
<dbReference type="GO" id="GO:0016020">
    <property type="term" value="C:membrane"/>
    <property type="evidence" value="ECO:0007669"/>
    <property type="project" value="UniProtKB-SubCell"/>
</dbReference>
<dbReference type="InterPro" id="IPR038814">
    <property type="entry name" value="AIM11"/>
</dbReference>
<dbReference type="PANTHER" id="PTHR39136">
    <property type="entry name" value="ALTERED INHERITANCE OF MITOCHONDRIA PROTEIN 11"/>
    <property type="match status" value="1"/>
</dbReference>
<dbReference type="PANTHER" id="PTHR39136:SF1">
    <property type="entry name" value="ALTERED INHERITANCE OF MITOCHONDRIA PROTEIN 11"/>
    <property type="match status" value="1"/>
</dbReference>
<keyword id="KW-0472">Membrane</keyword>
<keyword id="KW-1185">Reference proteome</keyword>
<keyword id="KW-0812">Transmembrane</keyword>
<keyword id="KW-1133">Transmembrane helix</keyword>
<evidence type="ECO:0000255" key="1"/>
<evidence type="ECO:0000305" key="2"/>
<feature type="chain" id="PRO_0000405642" description="Altered inheritance of mitochondria protein 11">
    <location>
        <begin position="1"/>
        <end position="165"/>
    </location>
</feature>
<feature type="transmembrane region" description="Helical" evidence="1">
    <location>
        <begin position="27"/>
        <end position="49"/>
    </location>
</feature>
<feature type="transmembrane region" description="Helical" evidence="1">
    <location>
        <begin position="78"/>
        <end position="100"/>
    </location>
</feature>